<feature type="chain" id="PRO_0000197541" description="Type 1 fimbriae regulatory protein FimE">
    <location>
        <begin position="1"/>
        <end position="198"/>
    </location>
</feature>
<feature type="domain" description="Tyr recombinase" evidence="1">
    <location>
        <begin position="2"/>
        <end position="184"/>
    </location>
</feature>
<feature type="active site" evidence="1">
    <location>
        <position position="41"/>
    </location>
</feature>
<feature type="active site" evidence="1">
    <location>
        <position position="66"/>
    </location>
</feature>
<feature type="active site" evidence="1">
    <location>
        <position position="136"/>
    </location>
</feature>
<feature type="active site" evidence="1">
    <location>
        <position position="139"/>
    </location>
</feature>
<feature type="active site" evidence="1">
    <location>
        <position position="162"/>
    </location>
</feature>
<feature type="active site" description="O-(3'-phospho-DNA)-tyrosine intermediate" evidence="1">
    <location>
        <position position="171"/>
    </location>
</feature>
<name>FIME_ECOLI</name>
<gene>
    <name type="primary">fimE</name>
    <name type="ordered locus">b4313</name>
    <name type="ordered locus">JW4276</name>
</gene>
<protein>
    <recommendedName>
        <fullName>Type 1 fimbriae regulatory protein FimE</fullName>
    </recommendedName>
</protein>
<dbReference type="EMBL" id="X03923">
    <property type="protein sequence ID" value="CAA27561.1"/>
    <property type="molecule type" value="Genomic_DNA"/>
</dbReference>
<dbReference type="EMBL" id="U14003">
    <property type="protein sequence ID" value="AAA97209.1"/>
    <property type="molecule type" value="Genomic_DNA"/>
</dbReference>
<dbReference type="EMBL" id="U00096">
    <property type="protein sequence ID" value="AAC77269.1"/>
    <property type="molecule type" value="Genomic_DNA"/>
</dbReference>
<dbReference type="EMBL" id="AP009048">
    <property type="protein sequence ID" value="BAE78306.1"/>
    <property type="molecule type" value="Genomic_DNA"/>
</dbReference>
<dbReference type="PIR" id="B25111">
    <property type="entry name" value="RGECFE"/>
</dbReference>
<dbReference type="RefSeq" id="NP_418733.1">
    <property type="nucleotide sequence ID" value="NC_000913.3"/>
</dbReference>
<dbReference type="RefSeq" id="WP_000044711.1">
    <property type="nucleotide sequence ID" value="NZ_STEB01000025.1"/>
</dbReference>
<dbReference type="SMR" id="P0ADH7"/>
<dbReference type="BioGRID" id="4259379">
    <property type="interactions" value="57"/>
</dbReference>
<dbReference type="FunCoup" id="P0ADH7">
    <property type="interactions" value="34"/>
</dbReference>
<dbReference type="IntAct" id="P0ADH7">
    <property type="interactions" value="1"/>
</dbReference>
<dbReference type="STRING" id="511145.b4313"/>
<dbReference type="PaxDb" id="511145-b4313"/>
<dbReference type="EnsemblBacteria" id="AAC77269">
    <property type="protein sequence ID" value="AAC77269"/>
    <property type="gene ID" value="b4313"/>
</dbReference>
<dbReference type="GeneID" id="75206127"/>
<dbReference type="GeneID" id="948836"/>
<dbReference type="KEGG" id="ecj:JW4276"/>
<dbReference type="KEGG" id="eco:b4313"/>
<dbReference type="KEGG" id="ecoc:C3026_23295"/>
<dbReference type="PATRIC" id="fig|1411691.4.peg.2379"/>
<dbReference type="EchoBASE" id="EB0308"/>
<dbReference type="eggNOG" id="COG4974">
    <property type="taxonomic scope" value="Bacteria"/>
</dbReference>
<dbReference type="HOGENOM" id="CLU_027562_39_0_6"/>
<dbReference type="InParanoid" id="P0ADH7"/>
<dbReference type="OMA" id="FKFAIHT"/>
<dbReference type="OrthoDB" id="9801717at2"/>
<dbReference type="PhylomeDB" id="P0ADH7"/>
<dbReference type="BioCyc" id="EcoCyc:EG10312-MONOMER"/>
<dbReference type="PRO" id="PR:P0ADH7"/>
<dbReference type="Proteomes" id="UP000000625">
    <property type="component" value="Chromosome"/>
</dbReference>
<dbReference type="GO" id="GO:0048476">
    <property type="term" value="C:Holliday junction resolvase complex"/>
    <property type="evidence" value="ECO:0000318"/>
    <property type="project" value="GO_Central"/>
</dbReference>
<dbReference type="GO" id="GO:0003677">
    <property type="term" value="F:DNA binding"/>
    <property type="evidence" value="ECO:0000318"/>
    <property type="project" value="GO_Central"/>
</dbReference>
<dbReference type="GO" id="GO:0043565">
    <property type="term" value="F:sequence-specific DNA binding"/>
    <property type="evidence" value="ECO:0000314"/>
    <property type="project" value="EcoCyc"/>
</dbReference>
<dbReference type="GO" id="GO:0009037">
    <property type="term" value="F:tyrosine-based site-specific recombinase activity"/>
    <property type="evidence" value="ECO:0000318"/>
    <property type="project" value="GO_Central"/>
</dbReference>
<dbReference type="GO" id="GO:0007059">
    <property type="term" value="P:chromosome segregation"/>
    <property type="evidence" value="ECO:0000318"/>
    <property type="project" value="GO_Central"/>
</dbReference>
<dbReference type="GO" id="GO:0015074">
    <property type="term" value="P:DNA integration"/>
    <property type="evidence" value="ECO:0000315"/>
    <property type="project" value="EcoCyc"/>
</dbReference>
<dbReference type="GO" id="GO:0006310">
    <property type="term" value="P:DNA recombination"/>
    <property type="evidence" value="ECO:0000315"/>
    <property type="project" value="EcoCyc"/>
</dbReference>
<dbReference type="GO" id="GO:0071139">
    <property type="term" value="P:resolution of DNA recombination intermediates"/>
    <property type="evidence" value="ECO:0000318"/>
    <property type="project" value="GO_Central"/>
</dbReference>
<dbReference type="FunFam" id="1.10.443.10:FF:000003">
    <property type="entry name" value="Type 1 fimbriae regulatory protein FimE"/>
    <property type="match status" value="1"/>
</dbReference>
<dbReference type="Gene3D" id="1.10.443.10">
    <property type="entry name" value="Intergrase catalytic core"/>
    <property type="match status" value="1"/>
</dbReference>
<dbReference type="InterPro" id="IPR011010">
    <property type="entry name" value="DNA_brk_join_enz"/>
</dbReference>
<dbReference type="InterPro" id="IPR013762">
    <property type="entry name" value="Integrase-like_cat_sf"/>
</dbReference>
<dbReference type="InterPro" id="IPR002104">
    <property type="entry name" value="Integrase_catalytic"/>
</dbReference>
<dbReference type="InterPro" id="IPR050090">
    <property type="entry name" value="Tyrosine_recombinase_XerCD"/>
</dbReference>
<dbReference type="NCBIfam" id="NF007370">
    <property type="entry name" value="PRK09870.1"/>
    <property type="match status" value="1"/>
</dbReference>
<dbReference type="NCBIfam" id="NF007371">
    <property type="entry name" value="PRK09871.1"/>
    <property type="match status" value="1"/>
</dbReference>
<dbReference type="PANTHER" id="PTHR30349">
    <property type="entry name" value="PHAGE INTEGRASE-RELATED"/>
    <property type="match status" value="1"/>
</dbReference>
<dbReference type="PANTHER" id="PTHR30349:SF62">
    <property type="entry name" value="TYPE 1 FIMBRIAE REGULATORY PROTEIN FIMB-RELATED"/>
    <property type="match status" value="1"/>
</dbReference>
<dbReference type="Pfam" id="PF00589">
    <property type="entry name" value="Phage_integrase"/>
    <property type="match status" value="1"/>
</dbReference>
<dbReference type="SUPFAM" id="SSF56349">
    <property type="entry name" value="DNA breaking-rejoining enzymes"/>
    <property type="match status" value="1"/>
</dbReference>
<dbReference type="PROSITE" id="PS51898">
    <property type="entry name" value="TYR_RECOMBINASE"/>
    <property type="match status" value="1"/>
</dbReference>
<proteinExistence type="inferred from homology"/>
<keyword id="KW-0229">DNA integration</keyword>
<keyword id="KW-0233">DNA recombination</keyword>
<keyword id="KW-1029">Fimbrium biogenesis</keyword>
<keyword id="KW-1185">Reference proteome</keyword>
<keyword id="KW-0804">Transcription</keyword>
<keyword id="KW-0805">Transcription regulation</keyword>
<comment type="function">
    <text>FimE is one of the 2 regulatory proteins which control the phase variation of type 1 fimbriae in E.coli. These proteins mediate the periodic inversion of a 300bp DNA segment that harbors the promoter for the fimbrial structural gene, fimA. FimE switches fimA off.</text>
</comment>
<comment type="similarity">
    <text evidence="2">Belongs to the 'phage' integrase family.</text>
</comment>
<reference key="1">
    <citation type="journal article" date="1986" name="EMBO J.">
        <title>Two regulatory fim genes, fimB and fimE, control the phase variation of type 1 fimbriae in Escherichia coli.</title>
        <authorList>
            <person name="Klemm P."/>
        </authorList>
    </citation>
    <scope>NUCLEOTIDE SEQUENCE [GENOMIC DNA]</scope>
</reference>
<reference key="2">
    <citation type="journal article" date="1995" name="Nucleic Acids Res.">
        <title>Analysis of the Escherichia coli genome VI: DNA sequence of the region from 92.8 through 100 minutes.</title>
        <authorList>
            <person name="Burland V.D."/>
            <person name="Plunkett G. III"/>
            <person name="Sofia H.J."/>
            <person name="Daniels D.L."/>
            <person name="Blattner F.R."/>
        </authorList>
    </citation>
    <scope>NUCLEOTIDE SEQUENCE [LARGE SCALE GENOMIC DNA]</scope>
    <source>
        <strain>K12 / MG1655 / ATCC 47076</strain>
    </source>
</reference>
<reference key="3">
    <citation type="journal article" date="1997" name="Science">
        <title>The complete genome sequence of Escherichia coli K-12.</title>
        <authorList>
            <person name="Blattner F.R."/>
            <person name="Plunkett G. III"/>
            <person name="Bloch C.A."/>
            <person name="Perna N.T."/>
            <person name="Burland V."/>
            <person name="Riley M."/>
            <person name="Collado-Vides J."/>
            <person name="Glasner J.D."/>
            <person name="Rode C.K."/>
            <person name="Mayhew G.F."/>
            <person name="Gregor J."/>
            <person name="Davis N.W."/>
            <person name="Kirkpatrick H.A."/>
            <person name="Goeden M.A."/>
            <person name="Rose D.J."/>
            <person name="Mau B."/>
            <person name="Shao Y."/>
        </authorList>
    </citation>
    <scope>NUCLEOTIDE SEQUENCE [LARGE SCALE GENOMIC DNA]</scope>
    <source>
        <strain>K12 / MG1655 / ATCC 47076</strain>
    </source>
</reference>
<reference key="4">
    <citation type="journal article" date="2006" name="Mol. Syst. Biol.">
        <title>Highly accurate genome sequences of Escherichia coli K-12 strains MG1655 and W3110.</title>
        <authorList>
            <person name="Hayashi K."/>
            <person name="Morooka N."/>
            <person name="Yamamoto Y."/>
            <person name="Fujita K."/>
            <person name="Isono K."/>
            <person name="Choi S."/>
            <person name="Ohtsubo E."/>
            <person name="Baba T."/>
            <person name="Wanner B.L."/>
            <person name="Mori H."/>
            <person name="Horiuchi T."/>
        </authorList>
    </citation>
    <scope>NUCLEOTIDE SEQUENCE [LARGE SCALE GENOMIC DNA]</scope>
    <source>
        <strain>K12 / W3110 / ATCC 27325 / DSM 5911</strain>
    </source>
</reference>
<evidence type="ECO:0000255" key="1">
    <source>
        <dbReference type="PROSITE-ProRule" id="PRU01246"/>
    </source>
</evidence>
<evidence type="ECO:0000305" key="2"/>
<sequence length="198" mass="23116">MSKRRYLTGKEVQAMMQAVCYGATGARDYCLILLAYRHGMRISELLDLHYQDLDLNEGRINIRRLKNGFSTVHPLRFDEREAVERWTQERANWKGADRTDAIFISRRGSRLSRQQAYRIIRDAGIEAGTVTQTHPHMLRHACGYELAERGADTRLIQDYLGHRNIRHTVRYTASNAARFAGLWERNNLINEKLKREEV</sequence>
<organism>
    <name type="scientific">Escherichia coli (strain K12)</name>
    <dbReference type="NCBI Taxonomy" id="83333"/>
    <lineage>
        <taxon>Bacteria</taxon>
        <taxon>Pseudomonadati</taxon>
        <taxon>Pseudomonadota</taxon>
        <taxon>Gammaproteobacteria</taxon>
        <taxon>Enterobacterales</taxon>
        <taxon>Enterobacteriaceae</taxon>
        <taxon>Escherichia</taxon>
    </lineage>
</organism>
<accession>P0ADH7</accession>
<accession>P04741</accession>
<accession>Q2M600</accession>